<evidence type="ECO:0000256" key="1">
    <source>
        <dbReference type="SAM" id="MobiDB-lite"/>
    </source>
</evidence>
<evidence type="ECO:0000269" key="2">
    <source>
    </source>
</evidence>
<evidence type="ECO:0000305" key="3"/>
<evidence type="ECO:0000312" key="4">
    <source>
        <dbReference type="HGNC" id="HGNC:19955"/>
    </source>
</evidence>
<name>FA30A_HUMAN</name>
<comment type="induction">
    <text evidence="2">Down-regulated when the beta-APP42/beta-APP40 ratio is high, which is typical of Alzheimer's disease.</text>
</comment>
<comment type="caution">
    <text evidence="3">Product of a dubious gene prediction. May be a non-coding RNA.</text>
</comment>
<comment type="sequence caution" evidence="3">
    <conflict type="frameshift">
        <sequence resource="EMBL-CDS" id="AAF29025"/>
    </conflict>
</comment>
<sequence length="134" mass="14626">MGTLQGAALRSRERPSWPQETHGHRERTEEGCAVAAFSADALRTGGQELEQTGLRPKAGAPPMPDLLGHRICTDIGKGWRMDGGRTCSCSSFCRCPERGARRSSPDAPGLALDFPLLLDLLWHLCSWTSQPLEL</sequence>
<dbReference type="EMBL" id="AF161538">
    <property type="protein sequence ID" value="AAF29025.1"/>
    <property type="status" value="ALT_FRAME"/>
    <property type="molecule type" value="mRNA"/>
</dbReference>
<dbReference type="EMBL" id="AB019441">
    <property type="status" value="NOT_ANNOTATED_CDS"/>
    <property type="molecule type" value="Genomic_DNA"/>
</dbReference>
<dbReference type="EMBL" id="CH471061">
    <property type="protein sequence ID" value="EAW81954.1"/>
    <property type="molecule type" value="Genomic_DNA"/>
</dbReference>
<dbReference type="BioMuta" id="HGNC:19955"/>
<dbReference type="AGR" id="HGNC:19955"/>
<dbReference type="GeneCards" id="FAM30A"/>
<dbReference type="HGNC" id="HGNC:19955">
    <property type="gene designation" value="FAM30A"/>
</dbReference>
<dbReference type="MIM" id="616623">
    <property type="type" value="gene"/>
</dbReference>
<dbReference type="neXtProt" id="NX_Q9NZY2"/>
<dbReference type="InParanoid" id="Q9NZY2"/>
<dbReference type="PAN-GO" id="Q9NZY2">
    <property type="GO annotations" value="0 GO annotations based on evolutionary models"/>
</dbReference>
<dbReference type="ChiTaRS" id="FAM30A">
    <property type="organism name" value="human"/>
</dbReference>
<dbReference type="Pharos" id="Q9NZY2">
    <property type="development level" value="Tdark"/>
</dbReference>
<dbReference type="PRO" id="PR:Q9NZY2"/>
<dbReference type="Proteomes" id="UP000005640">
    <property type="component" value="Unplaced"/>
</dbReference>
<dbReference type="RNAct" id="Q9NZY2">
    <property type="molecule type" value="protein"/>
</dbReference>
<accession>Q9NZY2</accession>
<accession>C9J8W9</accession>
<organism>
    <name type="scientific">Homo sapiens</name>
    <name type="common">Human</name>
    <dbReference type="NCBI Taxonomy" id="9606"/>
    <lineage>
        <taxon>Eukaryota</taxon>
        <taxon>Metazoa</taxon>
        <taxon>Chordata</taxon>
        <taxon>Craniata</taxon>
        <taxon>Vertebrata</taxon>
        <taxon>Euteleostomi</taxon>
        <taxon>Mammalia</taxon>
        <taxon>Eutheria</taxon>
        <taxon>Euarchontoglires</taxon>
        <taxon>Primates</taxon>
        <taxon>Haplorrhini</taxon>
        <taxon>Catarrhini</taxon>
        <taxon>Hominidae</taxon>
        <taxon>Homo</taxon>
    </lineage>
</organism>
<feature type="chain" id="PRO_0000089919" description="Putative uncharacterized protein FAM30A">
    <location>
        <begin position="1"/>
        <end position="134"/>
    </location>
</feature>
<feature type="region of interest" description="Disordered" evidence="1">
    <location>
        <begin position="1"/>
        <end position="30"/>
    </location>
</feature>
<feature type="compositionally biased region" description="Basic and acidic residues" evidence="1">
    <location>
        <begin position="10"/>
        <end position="30"/>
    </location>
</feature>
<keyword id="KW-1185">Reference proteome</keyword>
<proteinExistence type="uncertain"/>
<protein>
    <recommendedName>
        <fullName>Putative uncharacterized protein FAM30A</fullName>
    </recommendedName>
</protein>
<gene>
    <name evidence="4" type="primary">FAM30A</name>
    <name type="synonym">C14orf110</name>
    <name type="synonym">KIAA0125</name>
    <name type="ORF">HSPC053</name>
</gene>
<reference key="1">
    <citation type="journal article" date="2000" name="Genome Res.">
        <title>Cloning and functional analysis of cDNAs with open reading frames for 300 previously undefined genes expressed in CD34+ hematopoietic stem/progenitor cells.</title>
        <authorList>
            <person name="Zhang Q.-H."/>
            <person name="Ye M."/>
            <person name="Wu X.-Y."/>
            <person name="Ren S.-X."/>
            <person name="Zhao M."/>
            <person name="Zhao C.-J."/>
            <person name="Fu G."/>
            <person name="Shen Y."/>
            <person name="Fan H.-Y."/>
            <person name="Lu G."/>
            <person name="Zhong M."/>
            <person name="Xu X.-R."/>
            <person name="Han Z.-G."/>
            <person name="Zhang J.-W."/>
            <person name="Tao J."/>
            <person name="Huang Q.-H."/>
            <person name="Zhou J."/>
            <person name="Hu G.-X."/>
            <person name="Gu J."/>
            <person name="Chen S.-J."/>
            <person name="Chen Z."/>
        </authorList>
    </citation>
    <scope>NUCLEOTIDE SEQUENCE [LARGE SCALE MRNA]</scope>
    <source>
        <tissue>Blood</tissue>
    </source>
</reference>
<reference key="2">
    <citation type="journal article" date="2003" name="Nature">
        <title>The DNA sequence and analysis of human chromosome 14.</title>
        <authorList>
            <person name="Heilig R."/>
            <person name="Eckenberg R."/>
            <person name="Petit J.-L."/>
            <person name="Fonknechten N."/>
            <person name="Da Silva C."/>
            <person name="Cattolico L."/>
            <person name="Levy M."/>
            <person name="Barbe V."/>
            <person name="De Berardinis V."/>
            <person name="Ureta-Vidal A."/>
            <person name="Pelletier E."/>
            <person name="Vico V."/>
            <person name="Anthouard V."/>
            <person name="Rowen L."/>
            <person name="Madan A."/>
            <person name="Qin S."/>
            <person name="Sun H."/>
            <person name="Du H."/>
            <person name="Pepin K."/>
            <person name="Artiguenave F."/>
            <person name="Robert C."/>
            <person name="Cruaud C."/>
            <person name="Bruels T."/>
            <person name="Jaillon O."/>
            <person name="Friedlander L."/>
            <person name="Samson G."/>
            <person name="Brottier P."/>
            <person name="Cure S."/>
            <person name="Segurens B."/>
            <person name="Aniere F."/>
            <person name="Samain S."/>
            <person name="Crespeau H."/>
            <person name="Abbasi N."/>
            <person name="Aiach N."/>
            <person name="Boscus D."/>
            <person name="Dickhoff R."/>
            <person name="Dors M."/>
            <person name="Dubois I."/>
            <person name="Friedman C."/>
            <person name="Gouyvenoux M."/>
            <person name="James R."/>
            <person name="Madan A."/>
            <person name="Mairey-Estrada B."/>
            <person name="Mangenot S."/>
            <person name="Martins N."/>
            <person name="Menard M."/>
            <person name="Oztas S."/>
            <person name="Ratcliffe A."/>
            <person name="Shaffer T."/>
            <person name="Trask B."/>
            <person name="Vacherie B."/>
            <person name="Bellemere C."/>
            <person name="Belser C."/>
            <person name="Besnard-Gonnet M."/>
            <person name="Bartol-Mavel D."/>
            <person name="Boutard M."/>
            <person name="Briez-Silla S."/>
            <person name="Combette S."/>
            <person name="Dufosse-Laurent V."/>
            <person name="Ferron C."/>
            <person name="Lechaplais C."/>
            <person name="Louesse C."/>
            <person name="Muselet D."/>
            <person name="Magdelenat G."/>
            <person name="Pateau E."/>
            <person name="Petit E."/>
            <person name="Sirvain-Trukniewicz P."/>
            <person name="Trybou A."/>
            <person name="Vega-Czarny N."/>
            <person name="Bataille E."/>
            <person name="Bluet E."/>
            <person name="Bordelais I."/>
            <person name="Dubois M."/>
            <person name="Dumont C."/>
            <person name="Guerin T."/>
            <person name="Haffray S."/>
            <person name="Hammadi R."/>
            <person name="Muanga J."/>
            <person name="Pellouin V."/>
            <person name="Robert D."/>
            <person name="Wunderle E."/>
            <person name="Gauguet G."/>
            <person name="Roy A."/>
            <person name="Sainte-Marthe L."/>
            <person name="Verdier J."/>
            <person name="Verdier-Discala C."/>
            <person name="Hillier L.W."/>
            <person name="Fulton L."/>
            <person name="McPherson J."/>
            <person name="Matsuda F."/>
            <person name="Wilson R."/>
            <person name="Scarpelli C."/>
            <person name="Gyapay G."/>
            <person name="Wincker P."/>
            <person name="Saurin W."/>
            <person name="Quetier F."/>
            <person name="Waterston R."/>
            <person name="Hood L."/>
            <person name="Weissenbach J."/>
        </authorList>
    </citation>
    <scope>NUCLEOTIDE SEQUENCE [LARGE SCALE GENOMIC DNA]</scope>
</reference>
<reference key="3">
    <citation type="submission" date="2005-07" db="EMBL/GenBank/DDBJ databases">
        <authorList>
            <person name="Mural R.J."/>
            <person name="Istrail S."/>
            <person name="Sutton G.G."/>
            <person name="Florea L."/>
            <person name="Halpern A.L."/>
            <person name="Mobarry C.M."/>
            <person name="Lippert R."/>
            <person name="Walenz B."/>
            <person name="Shatkay H."/>
            <person name="Dew I."/>
            <person name="Miller J.R."/>
            <person name="Flanigan M.J."/>
            <person name="Edwards N.J."/>
            <person name="Bolanos R."/>
            <person name="Fasulo D."/>
            <person name="Halldorsson B.V."/>
            <person name="Hannenhalli S."/>
            <person name="Turner R."/>
            <person name="Yooseph S."/>
            <person name="Lu F."/>
            <person name="Nusskern D.R."/>
            <person name="Shue B.C."/>
            <person name="Zheng X.H."/>
            <person name="Zhong F."/>
            <person name="Delcher A.L."/>
            <person name="Huson D.H."/>
            <person name="Kravitz S.A."/>
            <person name="Mouchard L."/>
            <person name="Reinert K."/>
            <person name="Remington K.A."/>
            <person name="Clark A.G."/>
            <person name="Waterman M.S."/>
            <person name="Eichler E.E."/>
            <person name="Adams M.D."/>
            <person name="Hunkapiller M.W."/>
            <person name="Myers E.W."/>
            <person name="Venter J.C."/>
        </authorList>
    </citation>
    <scope>NUCLEOTIDE SEQUENCE [LARGE SCALE GENOMIC DNA]</scope>
</reference>
<reference key="4">
    <citation type="journal article" date="2009" name="PLoS ONE">
        <title>New Alzheimer amyloid beta responsive genes identified in human neuroblastoma cells by hierarchical clustering.</title>
        <authorList>
            <person name="Uhrig M."/>
            <person name="Ittrich C."/>
            <person name="Wiedmann V."/>
            <person name="Knyazev Y."/>
            <person name="Weninger A."/>
            <person name="Riemenschneider M."/>
            <person name="Hartmann T."/>
        </authorList>
    </citation>
    <scope>INDUCTION</scope>
</reference>